<protein>
    <recommendedName>
        <fullName evidence="1">CTP synthase</fullName>
        <ecNumber evidence="1">6.3.4.2</ecNumber>
    </recommendedName>
    <alternativeName>
        <fullName evidence="1">Cytidine 5'-triphosphate synthase</fullName>
    </alternativeName>
    <alternativeName>
        <fullName evidence="1">Cytidine triphosphate synthetase</fullName>
        <shortName evidence="1">CTP synthetase</shortName>
        <shortName evidence="1">CTPS</shortName>
    </alternativeName>
    <alternativeName>
        <fullName evidence="1">UTP--ammonia ligase</fullName>
    </alternativeName>
</protein>
<organism>
    <name type="scientific">Burkholderia mallei (strain NCTC 10229)</name>
    <dbReference type="NCBI Taxonomy" id="412022"/>
    <lineage>
        <taxon>Bacteria</taxon>
        <taxon>Pseudomonadati</taxon>
        <taxon>Pseudomonadota</taxon>
        <taxon>Betaproteobacteria</taxon>
        <taxon>Burkholderiales</taxon>
        <taxon>Burkholderiaceae</taxon>
        <taxon>Burkholderia</taxon>
        <taxon>pseudomallei group</taxon>
    </lineage>
</organism>
<comment type="function">
    <text evidence="1">Catalyzes the ATP-dependent amination of UTP to CTP with either L-glutamine or ammonia as the source of nitrogen. Regulates intracellular CTP levels through interactions with the four ribonucleotide triphosphates.</text>
</comment>
<comment type="catalytic activity">
    <reaction evidence="1">
        <text>UTP + L-glutamine + ATP + H2O = CTP + L-glutamate + ADP + phosphate + 2 H(+)</text>
        <dbReference type="Rhea" id="RHEA:26426"/>
        <dbReference type="ChEBI" id="CHEBI:15377"/>
        <dbReference type="ChEBI" id="CHEBI:15378"/>
        <dbReference type="ChEBI" id="CHEBI:29985"/>
        <dbReference type="ChEBI" id="CHEBI:30616"/>
        <dbReference type="ChEBI" id="CHEBI:37563"/>
        <dbReference type="ChEBI" id="CHEBI:43474"/>
        <dbReference type="ChEBI" id="CHEBI:46398"/>
        <dbReference type="ChEBI" id="CHEBI:58359"/>
        <dbReference type="ChEBI" id="CHEBI:456216"/>
        <dbReference type="EC" id="6.3.4.2"/>
    </reaction>
</comment>
<comment type="catalytic activity">
    <reaction evidence="1">
        <text>L-glutamine + H2O = L-glutamate + NH4(+)</text>
        <dbReference type="Rhea" id="RHEA:15889"/>
        <dbReference type="ChEBI" id="CHEBI:15377"/>
        <dbReference type="ChEBI" id="CHEBI:28938"/>
        <dbReference type="ChEBI" id="CHEBI:29985"/>
        <dbReference type="ChEBI" id="CHEBI:58359"/>
    </reaction>
</comment>
<comment type="catalytic activity">
    <reaction evidence="1">
        <text>UTP + NH4(+) + ATP = CTP + ADP + phosphate + 2 H(+)</text>
        <dbReference type="Rhea" id="RHEA:16597"/>
        <dbReference type="ChEBI" id="CHEBI:15378"/>
        <dbReference type="ChEBI" id="CHEBI:28938"/>
        <dbReference type="ChEBI" id="CHEBI:30616"/>
        <dbReference type="ChEBI" id="CHEBI:37563"/>
        <dbReference type="ChEBI" id="CHEBI:43474"/>
        <dbReference type="ChEBI" id="CHEBI:46398"/>
        <dbReference type="ChEBI" id="CHEBI:456216"/>
    </reaction>
</comment>
<comment type="activity regulation">
    <text evidence="1">Allosterically activated by GTP, when glutamine is the substrate; GTP has no effect on the reaction when ammonia is the substrate. The allosteric effector GTP functions by stabilizing the protein conformation that binds the tetrahedral intermediate(s) formed during glutamine hydrolysis. Inhibited by the product CTP, via allosteric rather than competitive inhibition.</text>
</comment>
<comment type="pathway">
    <text evidence="1">Pyrimidine metabolism; CTP biosynthesis via de novo pathway; CTP from UDP: step 2/2.</text>
</comment>
<comment type="subunit">
    <text evidence="1">Homotetramer.</text>
</comment>
<comment type="miscellaneous">
    <text evidence="1">CTPSs have evolved a hybrid strategy for distinguishing between UTP and CTP. The overlapping regions of the product feedback inhibitory and substrate sites recognize a common feature in both compounds, the triphosphate moiety. To differentiate isosteric substrate and product pyrimidine rings, an additional pocket far from the expected kinase/ligase catalytic site, specifically recognizes the cytosine and ribose portions of the product inhibitor.</text>
</comment>
<comment type="similarity">
    <text evidence="1">Belongs to the CTP synthase family.</text>
</comment>
<proteinExistence type="inferred from homology"/>
<sequence>MTKYVFVTGGVVSSLGKGIAAASLAAILESRGLKVTLLKLDPYINVDPGTMSPFQHGEVFVTEDGAETDLDLGHYERFISTKMRKANNFTTGQIYESVIRKERRGDYLGKTVQVIPHITNEIQAFIERGAASATCGEPDVAIVEIGGTVGDIESLPFLEAARQMSLRLGRNSACFVHLTLVPFIATAGELKTKPTQHSVQKLREIGISPHVLLCRADRPIPDDESKKISLFSNVPEDAVISVWDVDSIYKIPQMLHDQGLDRLICEELRLDPQPADLRMWAALVEKLQNPKHEVTIGMVGKYVDLTESYKSLIEALRHASIHTSTKVNIEYINSEELETNGTASLAHLDAVLVPGGFGRRGTEGKIAAVRYAREAKVPYLGICLGMQLAVIEFARDVVGLKQANSTEFDPNTPERVVALITEWYDREGKVEKRTEDSDLGGTMRLGSQRCPIKPGTLAEAIYGKDVNERHRHRYEVNNRFVPQLEAGGLVISARTPSEDLPEMMELPSTMHPWFVGVQFHPEFTSTPRDGHPLFKSFVQAALACQQTRAGAKA</sequence>
<dbReference type="EC" id="6.3.4.2" evidence="1"/>
<dbReference type="EMBL" id="CP000546">
    <property type="protein sequence ID" value="ABN02830.1"/>
    <property type="molecule type" value="Genomic_DNA"/>
</dbReference>
<dbReference type="RefSeq" id="WP_011832362.1">
    <property type="nucleotide sequence ID" value="NC_008836.1"/>
</dbReference>
<dbReference type="SMR" id="A2SAU5"/>
<dbReference type="KEGG" id="bml:BMA10229_A3123"/>
<dbReference type="HOGENOM" id="CLU_011675_5_0_4"/>
<dbReference type="UniPathway" id="UPA00159">
    <property type="reaction ID" value="UER00277"/>
</dbReference>
<dbReference type="Proteomes" id="UP000002283">
    <property type="component" value="Chromosome I"/>
</dbReference>
<dbReference type="GO" id="GO:0005829">
    <property type="term" value="C:cytosol"/>
    <property type="evidence" value="ECO:0007669"/>
    <property type="project" value="TreeGrafter"/>
</dbReference>
<dbReference type="GO" id="GO:0005524">
    <property type="term" value="F:ATP binding"/>
    <property type="evidence" value="ECO:0007669"/>
    <property type="project" value="UniProtKB-KW"/>
</dbReference>
<dbReference type="GO" id="GO:0003883">
    <property type="term" value="F:CTP synthase activity"/>
    <property type="evidence" value="ECO:0007669"/>
    <property type="project" value="UniProtKB-UniRule"/>
</dbReference>
<dbReference type="GO" id="GO:0004359">
    <property type="term" value="F:glutaminase activity"/>
    <property type="evidence" value="ECO:0007669"/>
    <property type="project" value="RHEA"/>
</dbReference>
<dbReference type="GO" id="GO:0042802">
    <property type="term" value="F:identical protein binding"/>
    <property type="evidence" value="ECO:0007669"/>
    <property type="project" value="TreeGrafter"/>
</dbReference>
<dbReference type="GO" id="GO:0046872">
    <property type="term" value="F:metal ion binding"/>
    <property type="evidence" value="ECO:0007669"/>
    <property type="project" value="UniProtKB-KW"/>
</dbReference>
<dbReference type="GO" id="GO:0044210">
    <property type="term" value="P:'de novo' CTP biosynthetic process"/>
    <property type="evidence" value="ECO:0007669"/>
    <property type="project" value="UniProtKB-UniRule"/>
</dbReference>
<dbReference type="GO" id="GO:0019856">
    <property type="term" value="P:pyrimidine nucleobase biosynthetic process"/>
    <property type="evidence" value="ECO:0007669"/>
    <property type="project" value="TreeGrafter"/>
</dbReference>
<dbReference type="CDD" id="cd03113">
    <property type="entry name" value="CTPS_N"/>
    <property type="match status" value="1"/>
</dbReference>
<dbReference type="CDD" id="cd01746">
    <property type="entry name" value="GATase1_CTP_Synthase"/>
    <property type="match status" value="1"/>
</dbReference>
<dbReference type="FunFam" id="3.40.50.300:FF:000009">
    <property type="entry name" value="CTP synthase"/>
    <property type="match status" value="1"/>
</dbReference>
<dbReference type="FunFam" id="3.40.50.880:FF:000002">
    <property type="entry name" value="CTP synthase"/>
    <property type="match status" value="1"/>
</dbReference>
<dbReference type="Gene3D" id="3.40.50.880">
    <property type="match status" value="1"/>
</dbReference>
<dbReference type="Gene3D" id="3.40.50.300">
    <property type="entry name" value="P-loop containing nucleotide triphosphate hydrolases"/>
    <property type="match status" value="1"/>
</dbReference>
<dbReference type="HAMAP" id="MF_01227">
    <property type="entry name" value="PyrG"/>
    <property type="match status" value="1"/>
</dbReference>
<dbReference type="InterPro" id="IPR029062">
    <property type="entry name" value="Class_I_gatase-like"/>
</dbReference>
<dbReference type="InterPro" id="IPR004468">
    <property type="entry name" value="CTP_synthase"/>
</dbReference>
<dbReference type="InterPro" id="IPR017456">
    <property type="entry name" value="CTP_synthase_N"/>
</dbReference>
<dbReference type="InterPro" id="IPR017926">
    <property type="entry name" value="GATASE"/>
</dbReference>
<dbReference type="InterPro" id="IPR033828">
    <property type="entry name" value="GATase1_CTP_Synthase"/>
</dbReference>
<dbReference type="InterPro" id="IPR027417">
    <property type="entry name" value="P-loop_NTPase"/>
</dbReference>
<dbReference type="NCBIfam" id="NF003792">
    <property type="entry name" value="PRK05380.1"/>
    <property type="match status" value="1"/>
</dbReference>
<dbReference type="NCBIfam" id="TIGR00337">
    <property type="entry name" value="PyrG"/>
    <property type="match status" value="1"/>
</dbReference>
<dbReference type="PANTHER" id="PTHR11550">
    <property type="entry name" value="CTP SYNTHASE"/>
    <property type="match status" value="1"/>
</dbReference>
<dbReference type="PANTHER" id="PTHR11550:SF0">
    <property type="entry name" value="CTP SYNTHASE-RELATED"/>
    <property type="match status" value="1"/>
</dbReference>
<dbReference type="Pfam" id="PF06418">
    <property type="entry name" value="CTP_synth_N"/>
    <property type="match status" value="1"/>
</dbReference>
<dbReference type="Pfam" id="PF00117">
    <property type="entry name" value="GATase"/>
    <property type="match status" value="1"/>
</dbReference>
<dbReference type="SUPFAM" id="SSF52317">
    <property type="entry name" value="Class I glutamine amidotransferase-like"/>
    <property type="match status" value="1"/>
</dbReference>
<dbReference type="SUPFAM" id="SSF52540">
    <property type="entry name" value="P-loop containing nucleoside triphosphate hydrolases"/>
    <property type="match status" value="1"/>
</dbReference>
<dbReference type="PROSITE" id="PS51273">
    <property type="entry name" value="GATASE_TYPE_1"/>
    <property type="match status" value="1"/>
</dbReference>
<evidence type="ECO:0000255" key="1">
    <source>
        <dbReference type="HAMAP-Rule" id="MF_01227"/>
    </source>
</evidence>
<gene>
    <name evidence="1" type="primary">pyrG</name>
    <name type="ordered locus">BMA10229_A3123</name>
</gene>
<keyword id="KW-0067">ATP-binding</keyword>
<keyword id="KW-0315">Glutamine amidotransferase</keyword>
<keyword id="KW-0436">Ligase</keyword>
<keyword id="KW-0460">Magnesium</keyword>
<keyword id="KW-0479">Metal-binding</keyword>
<keyword id="KW-0547">Nucleotide-binding</keyword>
<keyword id="KW-0665">Pyrimidine biosynthesis</keyword>
<accession>A2SAU5</accession>
<reference key="1">
    <citation type="journal article" date="2010" name="Genome Biol. Evol.">
        <title>Continuing evolution of Burkholderia mallei through genome reduction and large-scale rearrangements.</title>
        <authorList>
            <person name="Losada L."/>
            <person name="Ronning C.M."/>
            <person name="DeShazer D."/>
            <person name="Woods D."/>
            <person name="Fedorova N."/>
            <person name="Kim H.S."/>
            <person name="Shabalina S.A."/>
            <person name="Pearson T.R."/>
            <person name="Brinkac L."/>
            <person name="Tan P."/>
            <person name="Nandi T."/>
            <person name="Crabtree J."/>
            <person name="Badger J."/>
            <person name="Beckstrom-Sternberg S."/>
            <person name="Saqib M."/>
            <person name="Schutzer S.E."/>
            <person name="Keim P."/>
            <person name="Nierman W.C."/>
        </authorList>
    </citation>
    <scope>NUCLEOTIDE SEQUENCE [LARGE SCALE GENOMIC DNA]</scope>
    <source>
        <strain>NCTC 10229</strain>
    </source>
</reference>
<feature type="chain" id="PRO_1000139403" description="CTP synthase">
    <location>
        <begin position="1"/>
        <end position="553"/>
    </location>
</feature>
<feature type="domain" description="Glutamine amidotransferase type-1" evidence="1">
    <location>
        <begin position="295"/>
        <end position="547"/>
    </location>
</feature>
<feature type="region of interest" description="Amidoligase domain" evidence="1">
    <location>
        <begin position="1"/>
        <end position="270"/>
    </location>
</feature>
<feature type="active site" description="Nucleophile; for glutamine hydrolysis" evidence="1">
    <location>
        <position position="383"/>
    </location>
</feature>
<feature type="active site" evidence="1">
    <location>
        <position position="520"/>
    </location>
</feature>
<feature type="active site" evidence="1">
    <location>
        <position position="522"/>
    </location>
</feature>
<feature type="binding site" evidence="1">
    <location>
        <position position="13"/>
    </location>
    <ligand>
        <name>CTP</name>
        <dbReference type="ChEBI" id="CHEBI:37563"/>
        <note>allosteric inhibitor</note>
    </ligand>
</feature>
<feature type="binding site" evidence="1">
    <location>
        <position position="13"/>
    </location>
    <ligand>
        <name>UTP</name>
        <dbReference type="ChEBI" id="CHEBI:46398"/>
    </ligand>
</feature>
<feature type="binding site" evidence="1">
    <location>
        <begin position="14"/>
        <end position="19"/>
    </location>
    <ligand>
        <name>ATP</name>
        <dbReference type="ChEBI" id="CHEBI:30616"/>
    </ligand>
</feature>
<feature type="binding site" evidence="1">
    <location>
        <position position="71"/>
    </location>
    <ligand>
        <name>ATP</name>
        <dbReference type="ChEBI" id="CHEBI:30616"/>
    </ligand>
</feature>
<feature type="binding site" evidence="1">
    <location>
        <position position="71"/>
    </location>
    <ligand>
        <name>Mg(2+)</name>
        <dbReference type="ChEBI" id="CHEBI:18420"/>
    </ligand>
</feature>
<feature type="binding site" evidence="1">
    <location>
        <position position="144"/>
    </location>
    <ligand>
        <name>Mg(2+)</name>
        <dbReference type="ChEBI" id="CHEBI:18420"/>
    </ligand>
</feature>
<feature type="binding site" evidence="1">
    <location>
        <begin position="151"/>
        <end position="153"/>
    </location>
    <ligand>
        <name>CTP</name>
        <dbReference type="ChEBI" id="CHEBI:37563"/>
        <note>allosteric inhibitor</note>
    </ligand>
</feature>
<feature type="binding site" evidence="1">
    <location>
        <begin position="191"/>
        <end position="196"/>
    </location>
    <ligand>
        <name>CTP</name>
        <dbReference type="ChEBI" id="CHEBI:37563"/>
        <note>allosteric inhibitor</note>
    </ligand>
</feature>
<feature type="binding site" evidence="1">
    <location>
        <begin position="191"/>
        <end position="196"/>
    </location>
    <ligand>
        <name>UTP</name>
        <dbReference type="ChEBI" id="CHEBI:46398"/>
    </ligand>
</feature>
<feature type="binding site" evidence="1">
    <location>
        <position position="227"/>
    </location>
    <ligand>
        <name>CTP</name>
        <dbReference type="ChEBI" id="CHEBI:37563"/>
        <note>allosteric inhibitor</note>
    </ligand>
</feature>
<feature type="binding site" evidence="1">
    <location>
        <position position="227"/>
    </location>
    <ligand>
        <name>UTP</name>
        <dbReference type="ChEBI" id="CHEBI:46398"/>
    </ligand>
</feature>
<feature type="binding site" evidence="1">
    <location>
        <position position="356"/>
    </location>
    <ligand>
        <name>L-glutamine</name>
        <dbReference type="ChEBI" id="CHEBI:58359"/>
    </ligand>
</feature>
<feature type="binding site" evidence="1">
    <location>
        <begin position="384"/>
        <end position="387"/>
    </location>
    <ligand>
        <name>L-glutamine</name>
        <dbReference type="ChEBI" id="CHEBI:58359"/>
    </ligand>
</feature>
<feature type="binding site" evidence="1">
    <location>
        <position position="407"/>
    </location>
    <ligand>
        <name>L-glutamine</name>
        <dbReference type="ChEBI" id="CHEBI:58359"/>
    </ligand>
</feature>
<feature type="binding site" evidence="1">
    <location>
        <position position="473"/>
    </location>
    <ligand>
        <name>L-glutamine</name>
        <dbReference type="ChEBI" id="CHEBI:58359"/>
    </ligand>
</feature>
<name>PYRG_BURM9</name>